<comment type="function">
    <text evidence="1">Catalyzes the reversible hydration of cis-homoaconitate to (2R,3S)-homoisocitrate, a step in the alpha-aminoadipate pathway for lysine biosynthesis.</text>
</comment>
<comment type="catalytic activity">
    <reaction>
        <text>(2R,3S)-homoisocitrate = cis-homoaconitate + H2O</text>
        <dbReference type="Rhea" id="RHEA:15485"/>
        <dbReference type="ChEBI" id="CHEBI:15377"/>
        <dbReference type="ChEBI" id="CHEBI:15404"/>
        <dbReference type="ChEBI" id="CHEBI:58174"/>
        <dbReference type="EC" id="4.2.1.36"/>
    </reaction>
</comment>
<comment type="cofactor">
    <cofactor evidence="1">
        <name>[4Fe-4S] cluster</name>
        <dbReference type="ChEBI" id="CHEBI:49883"/>
    </cofactor>
    <text evidence="1">Binds 1 [4Fe-4S] cluster per subunit.</text>
</comment>
<comment type="pathway">
    <text>Amino-acid biosynthesis; L-lysine biosynthesis via AAA pathway; L-alpha-aminoadipate from 2-oxoglutarate: step 3/5.</text>
</comment>
<comment type="subcellular location">
    <subcellularLocation>
        <location evidence="1">Mitochondrion</location>
    </subcellularLocation>
</comment>
<comment type="similarity">
    <text evidence="3">Belongs to the aconitase/IPM isomerase family.</text>
</comment>
<gene>
    <name type="primary">lys4</name>
    <name type="ORF">AO090701000041</name>
</gene>
<sequence>MQSRLMPSGGPGRRWAFLRVPSTPQRRAFASTRFYFQDIFQSQLEDPSSAAVYSSLQASRAVPQTLTEKIVQKYSVGLAKDKFVKSGDYVTISPHRCMTHDNSWPVALKFMSIGATKLHDPKQIVMTLDHDVQNKSEKNLQKYRQIEDFAKHQGVEFYPAGRGIGHQVMVEEGYAWPGTLVVASDSHSNMYGGVGCLGTPIVRTDGASIWATGKTWWQIPPVAKVTLTGVLPPGVTGKDVIVALCGLFDKDDVLNHAIEFTGPEETMRSLSVDARLTIANMTTEWGALSGLFPIDNVLKGWLKGKATTAAMGLAEGPFKTLAPQHFTHPLLEQLFANPLTADKGAKYAKELFLDLSTLSPYVSGPNSVKVATPLKDLEAQNIKVNKAYLVSCTNSRASDIAAAARVFKEAAEKNGGKVPKIADGVEFYVAAASIPEQLAAEEAGDWQALLDAGATPLLPGCAQCIGLGTGLLEAGEVGISASNRNFKGRMGSTDAKAYLGSPEVVAASALTGKLSGPGWYQAPEGLTEVVRGEGDGIREEDRMLTAEQALEKLIGQIDNLVADGEKQFAPEESEESSGDSLTEVYPGFPERVSGEIVFCDADNINTDGIYPGKYTYQDDVSQETMAQVCMSNYDAQFSSIAKEGDILVTGFNFGCGSSREQAATAILAKKIPLVVSGSFGNIFSRNSINNALMGLEVPRLINRLRESFSGEGSDKSLTRRTGWTLTWDVRRSRIEVQEGENGPKWTHQVGELPPNVQEIIAKGGLEKWVKNEIGA</sequence>
<feature type="transit peptide" description="Mitochondrion" evidence="2">
    <location>
        <begin position="1"/>
        <end position="29"/>
    </location>
</feature>
<feature type="chain" id="PRO_0000247918" description="Homoaconitase, mitochondrial">
    <location>
        <begin position="30"/>
        <end position="775"/>
    </location>
</feature>
<feature type="binding site" evidence="1">
    <location>
        <position position="392"/>
    </location>
    <ligand>
        <name>[4Fe-4S] cluster</name>
        <dbReference type="ChEBI" id="CHEBI:49883"/>
    </ligand>
</feature>
<feature type="binding site" evidence="1">
    <location>
        <position position="461"/>
    </location>
    <ligand>
        <name>[4Fe-4S] cluster</name>
        <dbReference type="ChEBI" id="CHEBI:49883"/>
    </ligand>
</feature>
<feature type="binding site" evidence="1">
    <location>
        <position position="464"/>
    </location>
    <ligand>
        <name>[4Fe-4S] cluster</name>
        <dbReference type="ChEBI" id="CHEBI:49883"/>
    </ligand>
</feature>
<proteinExistence type="inferred from homology"/>
<accession>Q2U9G3</accession>
<keyword id="KW-0028">Amino-acid biosynthesis</keyword>
<keyword id="KW-0408">Iron</keyword>
<keyword id="KW-0411">Iron-sulfur</keyword>
<keyword id="KW-0456">Lyase</keyword>
<keyword id="KW-0457">Lysine biosynthesis</keyword>
<keyword id="KW-0479">Metal-binding</keyword>
<keyword id="KW-0496">Mitochondrion</keyword>
<keyword id="KW-1185">Reference proteome</keyword>
<keyword id="KW-0809">Transit peptide</keyword>
<protein>
    <recommendedName>
        <fullName>Homoaconitase, mitochondrial</fullName>
        <ecNumber>4.2.1.36</ecNumber>
    </recommendedName>
    <alternativeName>
        <fullName>Homoaconitate hydratase</fullName>
    </alternativeName>
</protein>
<dbReference type="EC" id="4.2.1.36"/>
<dbReference type="EMBL" id="BA000053">
    <property type="protein sequence ID" value="BAE61802.1"/>
    <property type="molecule type" value="Genomic_DNA"/>
</dbReference>
<dbReference type="SMR" id="Q2U9G3"/>
<dbReference type="STRING" id="510516.Q2U9G3"/>
<dbReference type="EnsemblFungi" id="BAE61802">
    <property type="protein sequence ID" value="BAE61802"/>
    <property type="gene ID" value="AO090701000041"/>
</dbReference>
<dbReference type="VEuPathDB" id="FungiDB:AO090701000041"/>
<dbReference type="HOGENOM" id="CLU_006714_3_1_1"/>
<dbReference type="OMA" id="EQMGEYC"/>
<dbReference type="UniPathway" id="UPA00033">
    <property type="reaction ID" value="UER01027"/>
</dbReference>
<dbReference type="Proteomes" id="UP000006564">
    <property type="component" value="Chromosome 5"/>
</dbReference>
<dbReference type="GO" id="GO:0005759">
    <property type="term" value="C:mitochondrial matrix"/>
    <property type="evidence" value="ECO:0007669"/>
    <property type="project" value="EnsemblFungi"/>
</dbReference>
<dbReference type="GO" id="GO:0051539">
    <property type="term" value="F:4 iron, 4 sulfur cluster binding"/>
    <property type="evidence" value="ECO:0007669"/>
    <property type="project" value="InterPro"/>
</dbReference>
<dbReference type="GO" id="GO:0004409">
    <property type="term" value="F:homoaconitate hydratase activity"/>
    <property type="evidence" value="ECO:0007669"/>
    <property type="project" value="UniProtKB-EC"/>
</dbReference>
<dbReference type="GO" id="GO:0046872">
    <property type="term" value="F:metal ion binding"/>
    <property type="evidence" value="ECO:0007669"/>
    <property type="project" value="UniProtKB-KW"/>
</dbReference>
<dbReference type="GO" id="GO:0019878">
    <property type="term" value="P:lysine biosynthetic process via aminoadipic acid"/>
    <property type="evidence" value="ECO:0007669"/>
    <property type="project" value="UniProtKB-UniPathway"/>
</dbReference>
<dbReference type="CDD" id="cd01582">
    <property type="entry name" value="Homoaconitase"/>
    <property type="match status" value="1"/>
</dbReference>
<dbReference type="CDD" id="cd01674">
    <property type="entry name" value="Homoaconitase_Swivel"/>
    <property type="match status" value="1"/>
</dbReference>
<dbReference type="FunFam" id="3.30.499.10:FF:000013">
    <property type="entry name" value="Homoaconitase, mitochondrial"/>
    <property type="match status" value="1"/>
</dbReference>
<dbReference type="FunFam" id="3.30.499.10:FF:000016">
    <property type="entry name" value="Homoaconitase, mitochondrial"/>
    <property type="match status" value="1"/>
</dbReference>
<dbReference type="Gene3D" id="3.30.499.10">
    <property type="entry name" value="Aconitase, domain 3"/>
    <property type="match status" value="2"/>
</dbReference>
<dbReference type="Gene3D" id="3.20.19.10">
    <property type="entry name" value="Aconitase, domain 4"/>
    <property type="match status" value="1"/>
</dbReference>
<dbReference type="InterPro" id="IPR015931">
    <property type="entry name" value="Acnase/IPM_dHydase_lsu_aba_1/3"/>
</dbReference>
<dbReference type="InterPro" id="IPR001030">
    <property type="entry name" value="Acoase/IPM_deHydtase_lsu_aba"/>
</dbReference>
<dbReference type="InterPro" id="IPR015928">
    <property type="entry name" value="Aconitase/3IPM_dehydase_swvl"/>
</dbReference>
<dbReference type="InterPro" id="IPR018136">
    <property type="entry name" value="Aconitase_4Fe-4S_BS"/>
</dbReference>
<dbReference type="InterPro" id="IPR036008">
    <property type="entry name" value="Aconitase_4Fe-4S_dom"/>
</dbReference>
<dbReference type="InterPro" id="IPR000573">
    <property type="entry name" value="AconitaseA/IPMdHydase_ssu_swvl"/>
</dbReference>
<dbReference type="InterPro" id="IPR004418">
    <property type="entry name" value="Homoaconitase_mito"/>
</dbReference>
<dbReference type="InterPro" id="IPR039386">
    <property type="entry name" value="Homoaconitase_swivel"/>
</dbReference>
<dbReference type="InterPro" id="IPR050067">
    <property type="entry name" value="IPM_dehydratase_rel_enz"/>
</dbReference>
<dbReference type="NCBIfam" id="TIGR00139">
    <property type="entry name" value="h_aconitase"/>
    <property type="match status" value="1"/>
</dbReference>
<dbReference type="PANTHER" id="PTHR43822:SF2">
    <property type="entry name" value="HOMOACONITASE, MITOCHONDRIAL"/>
    <property type="match status" value="1"/>
</dbReference>
<dbReference type="PANTHER" id="PTHR43822">
    <property type="entry name" value="HOMOACONITASE, MITOCHONDRIAL-RELATED"/>
    <property type="match status" value="1"/>
</dbReference>
<dbReference type="Pfam" id="PF00330">
    <property type="entry name" value="Aconitase"/>
    <property type="match status" value="1"/>
</dbReference>
<dbReference type="Pfam" id="PF00694">
    <property type="entry name" value="Aconitase_C"/>
    <property type="match status" value="1"/>
</dbReference>
<dbReference type="PRINTS" id="PR00415">
    <property type="entry name" value="ACONITASE"/>
</dbReference>
<dbReference type="SUPFAM" id="SSF53732">
    <property type="entry name" value="Aconitase iron-sulfur domain"/>
    <property type="match status" value="1"/>
</dbReference>
<dbReference type="SUPFAM" id="SSF52016">
    <property type="entry name" value="LeuD/IlvD-like"/>
    <property type="match status" value="1"/>
</dbReference>
<dbReference type="PROSITE" id="PS00450">
    <property type="entry name" value="ACONITASE_1"/>
    <property type="match status" value="1"/>
</dbReference>
<name>LYS4_ASPOR</name>
<evidence type="ECO:0000250" key="1"/>
<evidence type="ECO:0000255" key="2"/>
<evidence type="ECO:0000305" key="3"/>
<reference key="1">
    <citation type="journal article" date="2005" name="Nature">
        <title>Genome sequencing and analysis of Aspergillus oryzae.</title>
        <authorList>
            <person name="Machida M."/>
            <person name="Asai K."/>
            <person name="Sano M."/>
            <person name="Tanaka T."/>
            <person name="Kumagai T."/>
            <person name="Terai G."/>
            <person name="Kusumoto K."/>
            <person name="Arima T."/>
            <person name="Akita O."/>
            <person name="Kashiwagi Y."/>
            <person name="Abe K."/>
            <person name="Gomi K."/>
            <person name="Horiuchi H."/>
            <person name="Kitamoto K."/>
            <person name="Kobayashi T."/>
            <person name="Takeuchi M."/>
            <person name="Denning D.W."/>
            <person name="Galagan J.E."/>
            <person name="Nierman W.C."/>
            <person name="Yu J."/>
            <person name="Archer D.B."/>
            <person name="Bennett J.W."/>
            <person name="Bhatnagar D."/>
            <person name="Cleveland T.E."/>
            <person name="Fedorova N.D."/>
            <person name="Gotoh O."/>
            <person name="Horikawa H."/>
            <person name="Hosoyama A."/>
            <person name="Ichinomiya M."/>
            <person name="Igarashi R."/>
            <person name="Iwashita K."/>
            <person name="Juvvadi P.R."/>
            <person name="Kato M."/>
            <person name="Kato Y."/>
            <person name="Kin T."/>
            <person name="Kokubun A."/>
            <person name="Maeda H."/>
            <person name="Maeyama N."/>
            <person name="Maruyama J."/>
            <person name="Nagasaki H."/>
            <person name="Nakajima T."/>
            <person name="Oda K."/>
            <person name="Okada K."/>
            <person name="Paulsen I."/>
            <person name="Sakamoto K."/>
            <person name="Sawano T."/>
            <person name="Takahashi M."/>
            <person name="Takase K."/>
            <person name="Terabayashi Y."/>
            <person name="Wortman J.R."/>
            <person name="Yamada O."/>
            <person name="Yamagata Y."/>
            <person name="Anazawa H."/>
            <person name="Hata Y."/>
            <person name="Koide Y."/>
            <person name="Komori T."/>
            <person name="Koyama Y."/>
            <person name="Minetoki T."/>
            <person name="Suharnan S."/>
            <person name="Tanaka A."/>
            <person name="Isono K."/>
            <person name="Kuhara S."/>
            <person name="Ogasawara N."/>
            <person name="Kikuchi H."/>
        </authorList>
    </citation>
    <scope>NUCLEOTIDE SEQUENCE [LARGE SCALE GENOMIC DNA]</scope>
    <source>
        <strain>ATCC 42149 / RIB 40</strain>
    </source>
</reference>
<organism>
    <name type="scientific">Aspergillus oryzae (strain ATCC 42149 / RIB 40)</name>
    <name type="common">Yellow koji mold</name>
    <dbReference type="NCBI Taxonomy" id="510516"/>
    <lineage>
        <taxon>Eukaryota</taxon>
        <taxon>Fungi</taxon>
        <taxon>Dikarya</taxon>
        <taxon>Ascomycota</taxon>
        <taxon>Pezizomycotina</taxon>
        <taxon>Eurotiomycetes</taxon>
        <taxon>Eurotiomycetidae</taxon>
        <taxon>Eurotiales</taxon>
        <taxon>Aspergillaceae</taxon>
        <taxon>Aspergillus</taxon>
        <taxon>Aspergillus subgen. Circumdati</taxon>
    </lineage>
</organism>